<sequence>MSSPAEYYKSLPPISKAYGTLCFFTTVLVQLQILHPLFLYLDYPLVFKKFEIWRLLTSFFFLAPFSMKFGIRLLMIARYGVMLEKGAFDKRTADFLWMMIFGAISLLVLSIIPLFNSFFLGIPMVSMLLYVWSRENPNAQINIYGLVQLRSFYLPWAMLLLDVIFGSSLMPGLLGIMVGHLYYFFAVLHPLATGKSYLKTPKWVHKIVARFRIGMQANSPVRPPANGNSGSGVFRGRSYRLNQ</sequence>
<keyword id="KW-0256">Endoplasmic reticulum</keyword>
<keyword id="KW-0472">Membrane</keyword>
<keyword id="KW-1185">Reference proteome</keyword>
<keyword id="KW-0346">Stress response</keyword>
<keyword id="KW-0812">Transmembrane</keyword>
<keyword id="KW-1133">Transmembrane helix</keyword>
<gene>
    <name type="primary">DER1.1</name>
    <name type="synonym">SOR</name>
</gene>
<feature type="chain" id="PRO_0000249241" description="Derlin-1.1">
    <location>
        <begin position="1"/>
        <end position="243"/>
    </location>
</feature>
<feature type="topological domain" description="Cytoplasmic" evidence="1">
    <location>
        <begin position="1"/>
        <end position="20"/>
    </location>
</feature>
<feature type="transmembrane region" description="Helical; Name=1" evidence="1">
    <location>
        <begin position="21"/>
        <end position="41"/>
    </location>
</feature>
<feature type="topological domain" description="Lumenal" evidence="1">
    <location>
        <begin position="42"/>
        <end position="55"/>
    </location>
</feature>
<feature type="transmembrane region" description="Helical; Name=2" evidence="1">
    <location>
        <begin position="56"/>
        <end position="76"/>
    </location>
</feature>
<feature type="topological domain" description="Cytoplasmic" evidence="1">
    <location>
        <begin position="77"/>
        <end position="94"/>
    </location>
</feature>
<feature type="transmembrane region" description="Helical; Name=3" evidence="1">
    <location>
        <begin position="95"/>
        <end position="115"/>
    </location>
</feature>
<feature type="topological domain" description="Lumenal" evidence="1">
    <location>
        <begin position="116"/>
        <end position="157"/>
    </location>
</feature>
<feature type="transmembrane region" description="Helical; Name=4" evidence="1">
    <location>
        <begin position="158"/>
        <end position="178"/>
    </location>
</feature>
<feature type="topological domain" description="Cytoplasmic" evidence="1">
    <location>
        <begin position="179"/>
        <end position="243"/>
    </location>
</feature>
<feature type="region of interest" description="Disordered" evidence="2">
    <location>
        <begin position="219"/>
        <end position="243"/>
    </location>
</feature>
<feature type="sequence conflict" description="In Ref. 1; AAY41612." evidence="4" ref="1">
    <original>V</original>
    <variation>VR</variation>
    <location>
        <position position="204"/>
    </location>
</feature>
<organism>
    <name type="scientific">Zea mays</name>
    <name type="common">Maize</name>
    <dbReference type="NCBI Taxonomy" id="4577"/>
    <lineage>
        <taxon>Eukaryota</taxon>
        <taxon>Viridiplantae</taxon>
        <taxon>Streptophyta</taxon>
        <taxon>Embryophyta</taxon>
        <taxon>Tracheophyta</taxon>
        <taxon>Spermatophyta</taxon>
        <taxon>Magnoliopsida</taxon>
        <taxon>Liliopsida</taxon>
        <taxon>Poales</taxon>
        <taxon>Poaceae</taxon>
        <taxon>PACMAD clade</taxon>
        <taxon>Panicoideae</taxon>
        <taxon>Andropogonodae</taxon>
        <taxon>Andropogoneae</taxon>
        <taxon>Tripsacinae</taxon>
        <taxon>Zea</taxon>
    </lineage>
</organism>
<protein>
    <recommendedName>
        <fullName>Derlin-1.1</fullName>
    </recommendedName>
    <alternativeName>
        <fullName>ZmDerlin1-1</fullName>
    </alternativeName>
</protein>
<evidence type="ECO:0000255" key="1"/>
<evidence type="ECO:0000256" key="2">
    <source>
        <dbReference type="SAM" id="MobiDB-lite"/>
    </source>
</evidence>
<evidence type="ECO:0000269" key="3">
    <source>
    </source>
</evidence>
<evidence type="ECO:0000305" key="4"/>
<name>DER11_MAIZE</name>
<comment type="function">
    <text evidence="3">May be involved in the degradation process of specific misfolded endoplasmic reticulum (ER) luminal proteins.</text>
</comment>
<comment type="subcellular location">
    <subcellularLocation>
        <location evidence="3">Endoplasmic reticulum membrane</location>
        <topology evidence="3">Multi-pass membrane protein</topology>
    </subcellularLocation>
</comment>
<comment type="tissue specificity">
    <text evidence="3">Expressed in roots, stalks, leaves, immature ears, embryo and endosperm.</text>
</comment>
<comment type="induction">
    <text evidence="3">By endoplasmic reticulum stress.</text>
</comment>
<comment type="miscellaneous">
    <text>Associated with ER-derived protein bodies in endosperm.</text>
</comment>
<comment type="similarity">
    <text evidence="4">Belongs to the derlin family.</text>
</comment>
<comment type="sequence caution" evidence="4">
    <conflict type="erroneous gene model prediction">
        <sequence resource="EMBL-CDS" id="AAY41612"/>
    </conflict>
</comment>
<comment type="sequence caution" evidence="4">
    <conflict type="miscellaneous discrepancy">
        <sequence resource="EMBL-CDS" id="CAB97005"/>
    </conflict>
    <text>Chimeric cDNA.</text>
</comment>
<reference key="1">
    <citation type="journal article" date="2005" name="Plant Physiol.">
        <title>Identification and characterization of endoplasmic reticulum-associated degradation proteins differentially affected by endoplasmic reticulum stress.</title>
        <authorList>
            <person name="Kirst M.E."/>
            <person name="Meyer D.J."/>
            <person name="Gibbon B.C."/>
            <person name="Jung R."/>
            <person name="Boston R.S."/>
        </authorList>
    </citation>
    <scope>NUCLEOTIDE SEQUENCE [GENOMIC DNA / MRNA]</scope>
    <scope>FUNCTION</scope>
    <scope>SUBCELLULAR LOCATION</scope>
    <scope>TISSUE SPECIFICITY</scope>
    <scope>INDUCTION</scope>
    <source>
        <strain>cv. LH132</strain>
    </source>
</reference>
<reference key="2">
    <citation type="submission" date="2000-07" db="EMBL/GenBank/DDBJ databases">
        <title>A gradient of programmed cell death develops in scutellum during maize embryogenesis.</title>
        <authorList>
            <person name="Bastida M."/>
            <person name="Roca R."/>
            <person name="Cejudo F.J."/>
            <person name="Stiefel V."/>
            <person name="Puigdomenech P."/>
        </authorList>
    </citation>
    <scope>NUCLEOTIDE SEQUENCE [MRNA]</scope>
    <source>
        <strain>cv. Wisconsin 64A</strain>
    </source>
</reference>
<dbReference type="EMBL" id="AY854013">
    <property type="protein sequence ID" value="AAY41608.1"/>
    <property type="molecule type" value="mRNA"/>
</dbReference>
<dbReference type="EMBL" id="AY854017">
    <property type="protein sequence ID" value="AAY41612.1"/>
    <property type="status" value="ALT_SEQ"/>
    <property type="molecule type" value="Genomic_DNA"/>
</dbReference>
<dbReference type="EMBL" id="AJ251622">
    <property type="protein sequence ID" value="CAB97005.1"/>
    <property type="status" value="ALT_SEQ"/>
    <property type="molecule type" value="mRNA"/>
</dbReference>
<dbReference type="RefSeq" id="NP_001105945.1">
    <property type="nucleotide sequence ID" value="NM_001112475.1"/>
</dbReference>
<dbReference type="SMR" id="Q4G2J6"/>
<dbReference type="FunCoup" id="Q4G2J6">
    <property type="interactions" value="721"/>
</dbReference>
<dbReference type="STRING" id="4577.Q4G2J6"/>
<dbReference type="PaxDb" id="4577-GRMZM2G117388_P01"/>
<dbReference type="EnsemblPlants" id="Zm00001eb350050_T004">
    <property type="protein sequence ID" value="Zm00001eb350050_P004"/>
    <property type="gene ID" value="Zm00001eb350050"/>
</dbReference>
<dbReference type="EnsemblPlants" id="Zm00001eb350050_T006">
    <property type="protein sequence ID" value="Zm00001eb350050_P006"/>
    <property type="gene ID" value="Zm00001eb350050"/>
</dbReference>
<dbReference type="GeneID" id="100037763"/>
<dbReference type="Gramene" id="Zm00001eb350050_T004">
    <property type="protein sequence ID" value="Zm00001eb350050_P004"/>
    <property type="gene ID" value="Zm00001eb350050"/>
</dbReference>
<dbReference type="Gramene" id="Zm00001eb350050_T006">
    <property type="protein sequence ID" value="Zm00001eb350050_P006"/>
    <property type="gene ID" value="Zm00001eb350050"/>
</dbReference>
<dbReference type="KEGG" id="zma:100037763"/>
<dbReference type="eggNOG" id="KOG0858">
    <property type="taxonomic scope" value="Eukaryota"/>
</dbReference>
<dbReference type="InParanoid" id="Q4G2J6"/>
<dbReference type="OMA" id="YHHEDIA"/>
<dbReference type="OrthoDB" id="1716531at2759"/>
<dbReference type="Proteomes" id="UP000007305">
    <property type="component" value="Chromosome 8"/>
</dbReference>
<dbReference type="ExpressionAtlas" id="Q4G2J6">
    <property type="expression patterns" value="baseline and differential"/>
</dbReference>
<dbReference type="GO" id="GO:0005789">
    <property type="term" value="C:endoplasmic reticulum membrane"/>
    <property type="evidence" value="ECO:0000318"/>
    <property type="project" value="GO_Central"/>
</dbReference>
<dbReference type="GO" id="GO:0005047">
    <property type="term" value="F:signal recognition particle binding"/>
    <property type="evidence" value="ECO:0000318"/>
    <property type="project" value="GO_Central"/>
</dbReference>
<dbReference type="GO" id="GO:0030968">
    <property type="term" value="P:endoplasmic reticulum unfolded protein response"/>
    <property type="evidence" value="ECO:0000318"/>
    <property type="project" value="GO_Central"/>
</dbReference>
<dbReference type="GO" id="GO:0036503">
    <property type="term" value="P:ERAD pathway"/>
    <property type="evidence" value="ECO:0000318"/>
    <property type="project" value="GO_Central"/>
</dbReference>
<dbReference type="InterPro" id="IPR007599">
    <property type="entry name" value="DER1"/>
</dbReference>
<dbReference type="InterPro" id="IPR035952">
    <property type="entry name" value="Rhomboid-like_sf"/>
</dbReference>
<dbReference type="PANTHER" id="PTHR11009">
    <property type="entry name" value="DER1-LIKE PROTEIN, DERLIN"/>
    <property type="match status" value="1"/>
</dbReference>
<dbReference type="Pfam" id="PF04511">
    <property type="entry name" value="DER1"/>
    <property type="match status" value="1"/>
</dbReference>
<dbReference type="SUPFAM" id="SSF144091">
    <property type="entry name" value="Rhomboid-like"/>
    <property type="match status" value="1"/>
</dbReference>
<proteinExistence type="evidence at transcript level"/>
<accession>Q4G2J6</accession>
<accession>Q4G2K0</accession>
<accession>Q9LEE5</accession>